<evidence type="ECO:0000255" key="1">
    <source>
        <dbReference type="HAMAP-Rule" id="MF_00184"/>
    </source>
</evidence>
<evidence type="ECO:0000255" key="2">
    <source>
        <dbReference type="PROSITE-ProRule" id="PRU01228"/>
    </source>
</evidence>
<name>SYT_PROA2</name>
<comment type="function">
    <text evidence="1">Catalyzes the attachment of threonine to tRNA(Thr) in a two-step reaction: L-threonine is first activated by ATP to form Thr-AMP and then transferred to the acceptor end of tRNA(Thr). Also edits incorrectly charged L-seryl-tRNA(Thr).</text>
</comment>
<comment type="catalytic activity">
    <reaction evidence="1">
        <text>tRNA(Thr) + L-threonine + ATP = L-threonyl-tRNA(Thr) + AMP + diphosphate + H(+)</text>
        <dbReference type="Rhea" id="RHEA:24624"/>
        <dbReference type="Rhea" id="RHEA-COMP:9670"/>
        <dbReference type="Rhea" id="RHEA-COMP:9704"/>
        <dbReference type="ChEBI" id="CHEBI:15378"/>
        <dbReference type="ChEBI" id="CHEBI:30616"/>
        <dbReference type="ChEBI" id="CHEBI:33019"/>
        <dbReference type="ChEBI" id="CHEBI:57926"/>
        <dbReference type="ChEBI" id="CHEBI:78442"/>
        <dbReference type="ChEBI" id="CHEBI:78534"/>
        <dbReference type="ChEBI" id="CHEBI:456215"/>
        <dbReference type="EC" id="6.1.1.3"/>
    </reaction>
</comment>
<comment type="cofactor">
    <cofactor evidence="1">
        <name>Zn(2+)</name>
        <dbReference type="ChEBI" id="CHEBI:29105"/>
    </cofactor>
    <text evidence="1">Binds 1 zinc ion per subunit.</text>
</comment>
<comment type="subunit">
    <text evidence="1">Homodimer.</text>
</comment>
<comment type="subcellular location">
    <subcellularLocation>
        <location evidence="1">Cytoplasm</location>
    </subcellularLocation>
</comment>
<comment type="similarity">
    <text evidence="1">Belongs to the class-II aminoacyl-tRNA synthetase family.</text>
</comment>
<feature type="chain" id="PRO_1000098596" description="Threonine--tRNA ligase">
    <location>
        <begin position="1"/>
        <end position="657"/>
    </location>
</feature>
<feature type="domain" description="TGS" evidence="2">
    <location>
        <begin position="7"/>
        <end position="70"/>
    </location>
</feature>
<feature type="region of interest" description="Catalytic" evidence="1">
    <location>
        <begin position="253"/>
        <end position="555"/>
    </location>
</feature>
<feature type="binding site" evidence="1">
    <location>
        <position position="351"/>
    </location>
    <ligand>
        <name>Zn(2+)</name>
        <dbReference type="ChEBI" id="CHEBI:29105"/>
    </ligand>
</feature>
<feature type="binding site" evidence="1">
    <location>
        <position position="402"/>
    </location>
    <ligand>
        <name>Zn(2+)</name>
        <dbReference type="ChEBI" id="CHEBI:29105"/>
    </ligand>
</feature>
<feature type="binding site" evidence="1">
    <location>
        <position position="532"/>
    </location>
    <ligand>
        <name>Zn(2+)</name>
        <dbReference type="ChEBI" id="CHEBI:29105"/>
    </ligand>
</feature>
<gene>
    <name evidence="1" type="primary">thrS</name>
    <name type="ordered locus">Paes_0167</name>
</gene>
<keyword id="KW-0030">Aminoacyl-tRNA synthetase</keyword>
<keyword id="KW-0067">ATP-binding</keyword>
<keyword id="KW-0963">Cytoplasm</keyword>
<keyword id="KW-0436">Ligase</keyword>
<keyword id="KW-0479">Metal-binding</keyword>
<keyword id="KW-0547">Nucleotide-binding</keyword>
<keyword id="KW-0648">Protein biosynthesis</keyword>
<keyword id="KW-0694">RNA-binding</keyword>
<keyword id="KW-0820">tRNA-binding</keyword>
<keyword id="KW-0862">Zinc</keyword>
<dbReference type="EC" id="6.1.1.3" evidence="1"/>
<dbReference type="EMBL" id="CP001108">
    <property type="protein sequence ID" value="ACF45226.1"/>
    <property type="molecule type" value="Genomic_DNA"/>
</dbReference>
<dbReference type="RefSeq" id="WP_012504763.1">
    <property type="nucleotide sequence ID" value="NC_011059.1"/>
</dbReference>
<dbReference type="SMR" id="B4S3D2"/>
<dbReference type="STRING" id="290512.Paes_0167"/>
<dbReference type="KEGG" id="paa:Paes_0167"/>
<dbReference type="eggNOG" id="COG0441">
    <property type="taxonomic scope" value="Bacteria"/>
</dbReference>
<dbReference type="HOGENOM" id="CLU_008554_0_1_10"/>
<dbReference type="Proteomes" id="UP000002725">
    <property type="component" value="Chromosome"/>
</dbReference>
<dbReference type="GO" id="GO:0005737">
    <property type="term" value="C:cytoplasm"/>
    <property type="evidence" value="ECO:0007669"/>
    <property type="project" value="UniProtKB-SubCell"/>
</dbReference>
<dbReference type="GO" id="GO:0005524">
    <property type="term" value="F:ATP binding"/>
    <property type="evidence" value="ECO:0007669"/>
    <property type="project" value="UniProtKB-UniRule"/>
</dbReference>
<dbReference type="GO" id="GO:0046872">
    <property type="term" value="F:metal ion binding"/>
    <property type="evidence" value="ECO:0007669"/>
    <property type="project" value="UniProtKB-KW"/>
</dbReference>
<dbReference type="GO" id="GO:0004829">
    <property type="term" value="F:threonine-tRNA ligase activity"/>
    <property type="evidence" value="ECO:0007669"/>
    <property type="project" value="UniProtKB-UniRule"/>
</dbReference>
<dbReference type="GO" id="GO:0000049">
    <property type="term" value="F:tRNA binding"/>
    <property type="evidence" value="ECO:0007669"/>
    <property type="project" value="UniProtKB-KW"/>
</dbReference>
<dbReference type="GO" id="GO:0006435">
    <property type="term" value="P:threonyl-tRNA aminoacylation"/>
    <property type="evidence" value="ECO:0007669"/>
    <property type="project" value="UniProtKB-UniRule"/>
</dbReference>
<dbReference type="CDD" id="cd01667">
    <property type="entry name" value="TGS_ThrRS"/>
    <property type="match status" value="1"/>
</dbReference>
<dbReference type="CDD" id="cd00860">
    <property type="entry name" value="ThrRS_anticodon"/>
    <property type="match status" value="1"/>
</dbReference>
<dbReference type="CDD" id="cd00771">
    <property type="entry name" value="ThrRS_core"/>
    <property type="match status" value="1"/>
</dbReference>
<dbReference type="FunFam" id="3.30.54.20:FF:000002">
    <property type="entry name" value="Threonine--tRNA ligase"/>
    <property type="match status" value="1"/>
</dbReference>
<dbReference type="FunFam" id="3.30.930.10:FF:000002">
    <property type="entry name" value="Threonine--tRNA ligase"/>
    <property type="match status" value="1"/>
</dbReference>
<dbReference type="FunFam" id="3.40.50.800:FF:000001">
    <property type="entry name" value="Threonine--tRNA ligase"/>
    <property type="match status" value="1"/>
</dbReference>
<dbReference type="FunFam" id="3.30.980.10:FF:000005">
    <property type="entry name" value="Threonyl-tRNA synthetase, mitochondrial"/>
    <property type="match status" value="1"/>
</dbReference>
<dbReference type="Gene3D" id="3.10.20.30">
    <property type="match status" value="1"/>
</dbReference>
<dbReference type="Gene3D" id="3.30.54.20">
    <property type="match status" value="1"/>
</dbReference>
<dbReference type="Gene3D" id="3.40.50.800">
    <property type="entry name" value="Anticodon-binding domain"/>
    <property type="match status" value="1"/>
</dbReference>
<dbReference type="Gene3D" id="3.30.930.10">
    <property type="entry name" value="Bira Bifunctional Protein, Domain 2"/>
    <property type="match status" value="1"/>
</dbReference>
<dbReference type="Gene3D" id="3.30.980.10">
    <property type="entry name" value="Threonyl-trna Synthetase, Chain A, domain 2"/>
    <property type="match status" value="1"/>
</dbReference>
<dbReference type="HAMAP" id="MF_00184">
    <property type="entry name" value="Thr_tRNA_synth"/>
    <property type="match status" value="1"/>
</dbReference>
<dbReference type="InterPro" id="IPR002314">
    <property type="entry name" value="aa-tRNA-synt_IIb"/>
</dbReference>
<dbReference type="InterPro" id="IPR006195">
    <property type="entry name" value="aa-tRNA-synth_II"/>
</dbReference>
<dbReference type="InterPro" id="IPR045864">
    <property type="entry name" value="aa-tRNA-synth_II/BPL/LPL"/>
</dbReference>
<dbReference type="InterPro" id="IPR004154">
    <property type="entry name" value="Anticodon-bd"/>
</dbReference>
<dbReference type="InterPro" id="IPR036621">
    <property type="entry name" value="Anticodon-bd_dom_sf"/>
</dbReference>
<dbReference type="InterPro" id="IPR012675">
    <property type="entry name" value="Beta-grasp_dom_sf"/>
</dbReference>
<dbReference type="InterPro" id="IPR004095">
    <property type="entry name" value="TGS"/>
</dbReference>
<dbReference type="InterPro" id="IPR012676">
    <property type="entry name" value="TGS-like"/>
</dbReference>
<dbReference type="InterPro" id="IPR002320">
    <property type="entry name" value="Thr-tRNA-ligase_IIa"/>
</dbReference>
<dbReference type="InterPro" id="IPR018163">
    <property type="entry name" value="Thr/Ala-tRNA-synth_IIc_edit"/>
</dbReference>
<dbReference type="InterPro" id="IPR047246">
    <property type="entry name" value="ThrRS_anticodon"/>
</dbReference>
<dbReference type="InterPro" id="IPR033728">
    <property type="entry name" value="ThrRS_core"/>
</dbReference>
<dbReference type="InterPro" id="IPR012947">
    <property type="entry name" value="tRNA_SAD"/>
</dbReference>
<dbReference type="NCBIfam" id="TIGR00418">
    <property type="entry name" value="thrS"/>
    <property type="match status" value="1"/>
</dbReference>
<dbReference type="PANTHER" id="PTHR11451:SF44">
    <property type="entry name" value="THREONINE--TRNA LIGASE, CHLOROPLASTIC_MITOCHONDRIAL 2"/>
    <property type="match status" value="1"/>
</dbReference>
<dbReference type="PANTHER" id="PTHR11451">
    <property type="entry name" value="THREONINE-TRNA LIGASE"/>
    <property type="match status" value="1"/>
</dbReference>
<dbReference type="Pfam" id="PF03129">
    <property type="entry name" value="HGTP_anticodon"/>
    <property type="match status" value="1"/>
</dbReference>
<dbReference type="Pfam" id="PF02824">
    <property type="entry name" value="TGS"/>
    <property type="match status" value="1"/>
</dbReference>
<dbReference type="Pfam" id="PF00587">
    <property type="entry name" value="tRNA-synt_2b"/>
    <property type="match status" value="1"/>
</dbReference>
<dbReference type="Pfam" id="PF07973">
    <property type="entry name" value="tRNA_SAD"/>
    <property type="match status" value="1"/>
</dbReference>
<dbReference type="PRINTS" id="PR01047">
    <property type="entry name" value="TRNASYNTHTHR"/>
</dbReference>
<dbReference type="SMART" id="SM00863">
    <property type="entry name" value="tRNA_SAD"/>
    <property type="match status" value="1"/>
</dbReference>
<dbReference type="SUPFAM" id="SSF52954">
    <property type="entry name" value="Class II aaRS ABD-related"/>
    <property type="match status" value="1"/>
</dbReference>
<dbReference type="SUPFAM" id="SSF55681">
    <property type="entry name" value="Class II aaRS and biotin synthetases"/>
    <property type="match status" value="1"/>
</dbReference>
<dbReference type="SUPFAM" id="SSF81271">
    <property type="entry name" value="TGS-like"/>
    <property type="match status" value="1"/>
</dbReference>
<dbReference type="SUPFAM" id="SSF55186">
    <property type="entry name" value="ThrRS/AlaRS common domain"/>
    <property type="match status" value="1"/>
</dbReference>
<dbReference type="PROSITE" id="PS50862">
    <property type="entry name" value="AA_TRNA_LIGASE_II"/>
    <property type="match status" value="1"/>
</dbReference>
<dbReference type="PROSITE" id="PS51880">
    <property type="entry name" value="TGS"/>
    <property type="match status" value="1"/>
</dbReference>
<organism>
    <name type="scientific">Prosthecochloris aestuarii (strain DSM 271 / SK 413)</name>
    <dbReference type="NCBI Taxonomy" id="290512"/>
    <lineage>
        <taxon>Bacteria</taxon>
        <taxon>Pseudomonadati</taxon>
        <taxon>Chlorobiota</taxon>
        <taxon>Chlorobiia</taxon>
        <taxon>Chlorobiales</taxon>
        <taxon>Chlorobiaceae</taxon>
        <taxon>Prosthecochloris</taxon>
    </lineage>
</organism>
<reference key="1">
    <citation type="submission" date="2008-06" db="EMBL/GenBank/DDBJ databases">
        <title>Complete sequence of chromosome of Prosthecochloris aestuarii DSM 271.</title>
        <authorList>
            <consortium name="US DOE Joint Genome Institute"/>
            <person name="Lucas S."/>
            <person name="Copeland A."/>
            <person name="Lapidus A."/>
            <person name="Glavina del Rio T."/>
            <person name="Dalin E."/>
            <person name="Tice H."/>
            <person name="Bruce D."/>
            <person name="Goodwin L."/>
            <person name="Pitluck S."/>
            <person name="Schmutz J."/>
            <person name="Larimer F."/>
            <person name="Land M."/>
            <person name="Hauser L."/>
            <person name="Kyrpides N."/>
            <person name="Anderson I."/>
            <person name="Liu Z."/>
            <person name="Li T."/>
            <person name="Zhao F."/>
            <person name="Overmann J."/>
            <person name="Bryant D.A."/>
            <person name="Richardson P."/>
        </authorList>
    </citation>
    <scope>NUCLEOTIDE SEQUENCE [LARGE SCALE GENOMIC DNA]</scope>
    <source>
        <strain>DSM 271 / SK 413</strain>
    </source>
</reference>
<protein>
    <recommendedName>
        <fullName evidence="1">Threonine--tRNA ligase</fullName>
        <ecNumber evidence="1">6.1.1.3</ecNumber>
    </recommendedName>
    <alternativeName>
        <fullName evidence="1">Threonyl-tRNA synthetase</fullName>
        <shortName evidence="1">ThrRS</shortName>
    </alternativeName>
</protein>
<sequence>MSEHTTSQTQVTVTLPDGESRSFPFGTTGYDIARSIGKKLAQDALAVVINGRAQDLDSPVSEDASIEIVTFDHPLGKEIFWHSASHIMAHAIEELFPGSRFGAGPAIEQGFYYDIASSHRFTESDLHDIETRMIEIGRRAIDVRREELSRQAAIDFFSSTRKDPYKVEILEDTLKDTPTVSIYHQGEFADLCTGPHLPNTSKLKAVKLTNISASFWRGDSSRESMQRIYGIAFPSEKLLKQHLAHIEEAKKRDHRKLGAELELFMLSPEVGSGLPIWLPKGAIVRNELESFLREEQRKRGYVPVYTPHIGNIGLYKRSGHYPYYSESQFPPLTYTDDLGREEQYLLKPMNCPHHHMIYSSKLRSYRDLPIRLTEFGTVYRHEQSGELNGLIRARGFTQDDSHIYCRPDQLVDEICNAIDLTKFVFATLGFDDIQIRLSLHDPENQDKYGGTKEVWEQAEKDVREAADRMNIDYFTGIGEASFYGPKIDFIVRDAIGRKWQLGTVQVDYVMPERFDLSYIGSDGQPHRPVIIHRAPFGSMERFIGVLIEHTGGNFPLWLAPVQIAVLPITDEVHDYAVQVRDTLHAAGMRVELDTRSEKIGKKIRESEVAKIPYMVIIGQKEAAAGEVSLRRHREGDQGNMTVEELKEKLAKEINDKS</sequence>
<accession>B4S3D2</accession>
<proteinExistence type="inferred from homology"/>